<accession>Q7U4C6</accession>
<sequence length="224" mass="24310">MGLKPPLKTRNPRNPAVAGVGLRPQPLLIDSIPCHRGVAGVDEVGRGCLFGPVFAGAVVLEAANASRLQQEGLTDSKRLSARRRGDLVPLIEHEAEAWGLGQSSTREIDRLGIRPATELAMLRALQRLPNRPELVLVDGNLPLRPWTGEQRSIVAGDQHSLAIAAASVIAKQCRDALMQRLSQRFPGYGLERHAGYGTALHRAALLDLGPSALHRRSFLRRFLG</sequence>
<reference key="1">
    <citation type="journal article" date="2003" name="Nature">
        <title>The genome of a motile marine Synechococcus.</title>
        <authorList>
            <person name="Palenik B."/>
            <person name="Brahamsha B."/>
            <person name="Larimer F.W."/>
            <person name="Land M.L."/>
            <person name="Hauser L."/>
            <person name="Chain P."/>
            <person name="Lamerdin J.E."/>
            <person name="Regala W."/>
            <person name="Allen E.E."/>
            <person name="McCarren J."/>
            <person name="Paulsen I.T."/>
            <person name="Dufresne A."/>
            <person name="Partensky F."/>
            <person name="Webb E.A."/>
            <person name="Waterbury J."/>
        </authorList>
    </citation>
    <scope>NUCLEOTIDE SEQUENCE [LARGE SCALE GENOMIC DNA]</scope>
    <source>
        <strain>WH8102</strain>
    </source>
</reference>
<name>RNH2_PARMW</name>
<proteinExistence type="inferred from homology"/>
<keyword id="KW-0963">Cytoplasm</keyword>
<keyword id="KW-0255">Endonuclease</keyword>
<keyword id="KW-0378">Hydrolase</keyword>
<keyword id="KW-0464">Manganese</keyword>
<keyword id="KW-0479">Metal-binding</keyword>
<keyword id="KW-0540">Nuclease</keyword>
<feature type="chain" id="PRO_0000111641" description="Ribonuclease HII">
    <location>
        <begin position="1"/>
        <end position="224"/>
    </location>
</feature>
<feature type="domain" description="RNase H type-2" evidence="2">
    <location>
        <begin position="36"/>
        <end position="224"/>
    </location>
</feature>
<feature type="binding site" evidence="1">
    <location>
        <position position="42"/>
    </location>
    <ligand>
        <name>a divalent metal cation</name>
        <dbReference type="ChEBI" id="CHEBI:60240"/>
    </ligand>
</feature>
<feature type="binding site" evidence="1">
    <location>
        <position position="43"/>
    </location>
    <ligand>
        <name>a divalent metal cation</name>
        <dbReference type="ChEBI" id="CHEBI:60240"/>
    </ligand>
</feature>
<feature type="binding site" evidence="1">
    <location>
        <position position="138"/>
    </location>
    <ligand>
        <name>a divalent metal cation</name>
        <dbReference type="ChEBI" id="CHEBI:60240"/>
    </ligand>
</feature>
<protein>
    <recommendedName>
        <fullName evidence="1">Ribonuclease HII</fullName>
        <shortName evidence="1">RNase HII</shortName>
        <ecNumber evidence="1">3.1.26.4</ecNumber>
    </recommendedName>
</protein>
<gene>
    <name evidence="1" type="primary">rnhB</name>
    <name type="ordered locus">SYNW2144</name>
</gene>
<comment type="function">
    <text evidence="1">Endonuclease that specifically degrades the RNA of RNA-DNA hybrids.</text>
</comment>
<comment type="catalytic activity">
    <reaction evidence="1">
        <text>Endonucleolytic cleavage to 5'-phosphomonoester.</text>
        <dbReference type="EC" id="3.1.26.4"/>
    </reaction>
</comment>
<comment type="cofactor">
    <cofactor evidence="1">
        <name>Mn(2+)</name>
        <dbReference type="ChEBI" id="CHEBI:29035"/>
    </cofactor>
    <cofactor evidence="1">
        <name>Mg(2+)</name>
        <dbReference type="ChEBI" id="CHEBI:18420"/>
    </cofactor>
    <text evidence="1">Manganese or magnesium. Binds 1 divalent metal ion per monomer in the absence of substrate. May bind a second metal ion after substrate binding.</text>
</comment>
<comment type="subcellular location">
    <subcellularLocation>
        <location evidence="1">Cytoplasm</location>
    </subcellularLocation>
</comment>
<comment type="similarity">
    <text evidence="1">Belongs to the RNase HII family.</text>
</comment>
<comment type="sequence caution" evidence="3">
    <conflict type="erroneous initiation">
        <sequence resource="EMBL-CDS" id="CAE08659"/>
    </conflict>
</comment>
<organism>
    <name type="scientific">Parasynechococcus marenigrum (strain WH8102)</name>
    <dbReference type="NCBI Taxonomy" id="84588"/>
    <lineage>
        <taxon>Bacteria</taxon>
        <taxon>Bacillati</taxon>
        <taxon>Cyanobacteriota</taxon>
        <taxon>Cyanophyceae</taxon>
        <taxon>Synechococcales</taxon>
        <taxon>Prochlorococcaceae</taxon>
        <taxon>Parasynechococcus</taxon>
        <taxon>Parasynechococcus marenigrum</taxon>
    </lineage>
</organism>
<dbReference type="EC" id="3.1.26.4" evidence="1"/>
<dbReference type="EMBL" id="BX569694">
    <property type="protein sequence ID" value="CAE08659.1"/>
    <property type="status" value="ALT_INIT"/>
    <property type="molecule type" value="Genomic_DNA"/>
</dbReference>
<dbReference type="RefSeq" id="WP_052298034.1">
    <property type="nucleotide sequence ID" value="NC_005070.1"/>
</dbReference>
<dbReference type="SMR" id="Q7U4C6"/>
<dbReference type="STRING" id="84588.SYNW2144"/>
<dbReference type="KEGG" id="syw:SYNW2144"/>
<dbReference type="eggNOG" id="COG0164">
    <property type="taxonomic scope" value="Bacteria"/>
</dbReference>
<dbReference type="HOGENOM" id="CLU_036532_3_1_3"/>
<dbReference type="Proteomes" id="UP000001422">
    <property type="component" value="Chromosome"/>
</dbReference>
<dbReference type="GO" id="GO:0005737">
    <property type="term" value="C:cytoplasm"/>
    <property type="evidence" value="ECO:0007669"/>
    <property type="project" value="UniProtKB-SubCell"/>
</dbReference>
<dbReference type="GO" id="GO:0032299">
    <property type="term" value="C:ribonuclease H2 complex"/>
    <property type="evidence" value="ECO:0007669"/>
    <property type="project" value="TreeGrafter"/>
</dbReference>
<dbReference type="GO" id="GO:0030145">
    <property type="term" value="F:manganese ion binding"/>
    <property type="evidence" value="ECO:0007669"/>
    <property type="project" value="UniProtKB-UniRule"/>
</dbReference>
<dbReference type="GO" id="GO:0003723">
    <property type="term" value="F:RNA binding"/>
    <property type="evidence" value="ECO:0007669"/>
    <property type="project" value="InterPro"/>
</dbReference>
<dbReference type="GO" id="GO:0004523">
    <property type="term" value="F:RNA-DNA hybrid ribonuclease activity"/>
    <property type="evidence" value="ECO:0007669"/>
    <property type="project" value="UniProtKB-UniRule"/>
</dbReference>
<dbReference type="GO" id="GO:0043137">
    <property type="term" value="P:DNA replication, removal of RNA primer"/>
    <property type="evidence" value="ECO:0007669"/>
    <property type="project" value="TreeGrafter"/>
</dbReference>
<dbReference type="GO" id="GO:0006298">
    <property type="term" value="P:mismatch repair"/>
    <property type="evidence" value="ECO:0007669"/>
    <property type="project" value="TreeGrafter"/>
</dbReference>
<dbReference type="CDD" id="cd07182">
    <property type="entry name" value="RNase_HII_bacteria_HII_like"/>
    <property type="match status" value="1"/>
</dbReference>
<dbReference type="Gene3D" id="3.30.420.10">
    <property type="entry name" value="Ribonuclease H-like superfamily/Ribonuclease H"/>
    <property type="match status" value="1"/>
</dbReference>
<dbReference type="HAMAP" id="MF_00052_B">
    <property type="entry name" value="RNase_HII_B"/>
    <property type="match status" value="1"/>
</dbReference>
<dbReference type="InterPro" id="IPR022898">
    <property type="entry name" value="RNase_HII"/>
</dbReference>
<dbReference type="InterPro" id="IPR001352">
    <property type="entry name" value="RNase_HII/HIII"/>
</dbReference>
<dbReference type="InterPro" id="IPR024567">
    <property type="entry name" value="RNase_HII/HIII_dom"/>
</dbReference>
<dbReference type="InterPro" id="IPR012337">
    <property type="entry name" value="RNaseH-like_sf"/>
</dbReference>
<dbReference type="InterPro" id="IPR036397">
    <property type="entry name" value="RNaseH_sf"/>
</dbReference>
<dbReference type="NCBIfam" id="NF000595">
    <property type="entry name" value="PRK00015.1-3"/>
    <property type="match status" value="1"/>
</dbReference>
<dbReference type="NCBIfam" id="NF010537">
    <property type="entry name" value="PRK13925.1"/>
    <property type="match status" value="1"/>
</dbReference>
<dbReference type="PANTHER" id="PTHR10954">
    <property type="entry name" value="RIBONUCLEASE H2 SUBUNIT A"/>
    <property type="match status" value="1"/>
</dbReference>
<dbReference type="PANTHER" id="PTHR10954:SF18">
    <property type="entry name" value="RIBONUCLEASE HII"/>
    <property type="match status" value="1"/>
</dbReference>
<dbReference type="Pfam" id="PF01351">
    <property type="entry name" value="RNase_HII"/>
    <property type="match status" value="1"/>
</dbReference>
<dbReference type="SUPFAM" id="SSF53098">
    <property type="entry name" value="Ribonuclease H-like"/>
    <property type="match status" value="1"/>
</dbReference>
<dbReference type="PROSITE" id="PS51975">
    <property type="entry name" value="RNASE_H_2"/>
    <property type="match status" value="1"/>
</dbReference>
<evidence type="ECO:0000255" key="1">
    <source>
        <dbReference type="HAMAP-Rule" id="MF_00052"/>
    </source>
</evidence>
<evidence type="ECO:0000255" key="2">
    <source>
        <dbReference type="PROSITE-ProRule" id="PRU01319"/>
    </source>
</evidence>
<evidence type="ECO:0000305" key="3"/>